<reference key="1">
    <citation type="journal article" date="1995" name="J. Bacteriol.">
        <title>Chlamydia trachomatis RNA polymerase alpha subunit: sequence and structural analysis.</title>
        <authorList>
            <person name="Gu L.J."/>
            <person name="Wenman W.M."/>
            <person name="Remacha M."/>
            <person name="Meuser R.U."/>
            <person name="Coffin J.M."/>
            <person name="Kaul R."/>
        </authorList>
    </citation>
    <scope>NUCLEOTIDE SEQUENCE [GENOMIC DNA]</scope>
</reference>
<reference key="2">
    <citation type="journal article" date="2008" name="Genome Res.">
        <title>Chlamydia trachomatis: genome sequence analysis of lymphogranuloma venereum isolates.</title>
        <authorList>
            <person name="Thomson N.R."/>
            <person name="Holden M.T.G."/>
            <person name="Carder C."/>
            <person name="Lennard N."/>
            <person name="Lockey S.J."/>
            <person name="Marsh P."/>
            <person name="Skipp P."/>
            <person name="O'Connor C.D."/>
            <person name="Goodhead I."/>
            <person name="Norbertzcak H."/>
            <person name="Harris B."/>
            <person name="Ormond D."/>
            <person name="Rance R."/>
            <person name="Quail M.A."/>
            <person name="Parkhill J."/>
            <person name="Stephens R.S."/>
            <person name="Clarke I.N."/>
        </authorList>
    </citation>
    <scope>NUCLEOTIDE SEQUENCE [LARGE SCALE GENOMIC DNA]</scope>
    <source>
        <strain>ATCC VR-902B / DSM 19102 / 434/Bu</strain>
    </source>
</reference>
<protein>
    <recommendedName>
        <fullName evidence="1">Large ribosomal subunit protein bL17</fullName>
    </recommendedName>
    <alternativeName>
        <fullName evidence="2">50S ribosomal protein L17</fullName>
    </alternativeName>
</protein>
<organism>
    <name type="scientific">Chlamydia trachomatis serovar L2 (strain ATCC VR-902B / DSM 19102 / 434/Bu)</name>
    <dbReference type="NCBI Taxonomy" id="471472"/>
    <lineage>
        <taxon>Bacteria</taxon>
        <taxon>Pseudomonadati</taxon>
        <taxon>Chlamydiota</taxon>
        <taxon>Chlamydiia</taxon>
        <taxon>Chlamydiales</taxon>
        <taxon>Chlamydiaceae</taxon>
        <taxon>Chlamydia/Chlamydophila group</taxon>
        <taxon>Chlamydia</taxon>
    </lineage>
</organism>
<dbReference type="EMBL" id="L33834">
    <property type="protein sequence ID" value="AAA74990.1"/>
    <property type="status" value="ALT_FRAME"/>
    <property type="molecule type" value="Genomic_DNA"/>
</dbReference>
<dbReference type="EMBL" id="AM884176">
    <property type="protein sequence ID" value="CAP04206.1"/>
    <property type="molecule type" value="Genomic_DNA"/>
</dbReference>
<dbReference type="PIR" id="H71504">
    <property type="entry name" value="H71504"/>
</dbReference>
<dbReference type="RefSeq" id="WP_009871870.1">
    <property type="nucleotide sequence ID" value="NC_010287.1"/>
</dbReference>
<dbReference type="RefSeq" id="YP_001654839.1">
    <property type="nucleotide sequence ID" value="NC_010287.1"/>
</dbReference>
<dbReference type="SMR" id="B0B880"/>
<dbReference type="KEGG" id="ctb:CTL0768"/>
<dbReference type="PATRIC" id="fig|471472.4.peg.824"/>
<dbReference type="HOGENOM" id="CLU_074407_2_0_0"/>
<dbReference type="Proteomes" id="UP001154402">
    <property type="component" value="Chromosome"/>
</dbReference>
<dbReference type="GO" id="GO:0022625">
    <property type="term" value="C:cytosolic large ribosomal subunit"/>
    <property type="evidence" value="ECO:0007669"/>
    <property type="project" value="TreeGrafter"/>
</dbReference>
<dbReference type="GO" id="GO:0003735">
    <property type="term" value="F:structural constituent of ribosome"/>
    <property type="evidence" value="ECO:0007669"/>
    <property type="project" value="InterPro"/>
</dbReference>
<dbReference type="GO" id="GO:0006412">
    <property type="term" value="P:translation"/>
    <property type="evidence" value="ECO:0007669"/>
    <property type="project" value="UniProtKB-UniRule"/>
</dbReference>
<dbReference type="FunFam" id="3.90.1030.10:FF:000003">
    <property type="entry name" value="50S ribosomal protein L17"/>
    <property type="match status" value="1"/>
</dbReference>
<dbReference type="Gene3D" id="3.90.1030.10">
    <property type="entry name" value="Ribosomal protein L17"/>
    <property type="match status" value="1"/>
</dbReference>
<dbReference type="HAMAP" id="MF_01368">
    <property type="entry name" value="Ribosomal_bL17"/>
    <property type="match status" value="1"/>
</dbReference>
<dbReference type="InterPro" id="IPR000456">
    <property type="entry name" value="Ribosomal_bL17"/>
</dbReference>
<dbReference type="InterPro" id="IPR047859">
    <property type="entry name" value="Ribosomal_bL17_CS"/>
</dbReference>
<dbReference type="InterPro" id="IPR036373">
    <property type="entry name" value="Ribosomal_bL17_sf"/>
</dbReference>
<dbReference type="NCBIfam" id="TIGR00059">
    <property type="entry name" value="L17"/>
    <property type="match status" value="1"/>
</dbReference>
<dbReference type="PANTHER" id="PTHR14413:SF16">
    <property type="entry name" value="LARGE RIBOSOMAL SUBUNIT PROTEIN BL17M"/>
    <property type="match status" value="1"/>
</dbReference>
<dbReference type="PANTHER" id="PTHR14413">
    <property type="entry name" value="RIBOSOMAL PROTEIN L17"/>
    <property type="match status" value="1"/>
</dbReference>
<dbReference type="Pfam" id="PF01196">
    <property type="entry name" value="Ribosomal_L17"/>
    <property type="match status" value="1"/>
</dbReference>
<dbReference type="SUPFAM" id="SSF64263">
    <property type="entry name" value="Prokaryotic ribosomal protein L17"/>
    <property type="match status" value="1"/>
</dbReference>
<dbReference type="PROSITE" id="PS01167">
    <property type="entry name" value="RIBOSOMAL_L17"/>
    <property type="match status" value="1"/>
</dbReference>
<name>RL17_CHLT2</name>
<keyword id="KW-0687">Ribonucleoprotein</keyword>
<keyword id="KW-0689">Ribosomal protein</keyword>
<sequence length="141" mass="16152">MQHARKKFRVGRTSSHNRCMLANMLKSLIHNERIETTLPKAKELRRHADKMITLAKKNTLAARRLAVGRLMVRYNTLTSKEARQVKAGDLSAYNVDRRVIGKLFDVLATRFSSRNGGYTRILKLQNRVGDNAQKCIIEFLA</sequence>
<gene>
    <name evidence="1" type="primary">rplQ</name>
    <name type="ordered locus">CTL0768</name>
</gene>
<feature type="chain" id="PRO_1000144397" description="Large ribosomal subunit protein bL17">
    <location>
        <begin position="1"/>
        <end position="141"/>
    </location>
</feature>
<feature type="sequence conflict" description="In Ref. 1; AAA74990." evidence="2" ref="1">
    <original>G</original>
    <variation>R</variation>
    <location>
        <position position="116"/>
    </location>
</feature>
<proteinExistence type="inferred from homology"/>
<evidence type="ECO:0000255" key="1">
    <source>
        <dbReference type="HAMAP-Rule" id="MF_01368"/>
    </source>
</evidence>
<evidence type="ECO:0000305" key="2"/>
<accession>B0B880</accession>
<accession>O84514</accession>
<accession>P47760</accession>
<comment type="subunit">
    <text evidence="1">Part of the 50S ribosomal subunit. Contacts protein L32.</text>
</comment>
<comment type="similarity">
    <text evidence="1">Belongs to the bacterial ribosomal protein bL17 family.</text>
</comment>
<comment type="sequence caution" evidence="2">
    <conflict type="frameshift">
        <sequence resource="EMBL-CDS" id="AAA74990"/>
    </conflict>
</comment>